<comment type="function">
    <text evidence="1">Fluoride-specific ion channel. Important for reducing fluoride concentration in the cell, thus reducing its toxicity.</text>
</comment>
<comment type="catalytic activity">
    <reaction evidence="1">
        <text>fluoride(in) = fluoride(out)</text>
        <dbReference type="Rhea" id="RHEA:76159"/>
        <dbReference type="ChEBI" id="CHEBI:17051"/>
    </reaction>
    <physiologicalReaction direction="left-to-right" evidence="1">
        <dbReference type="Rhea" id="RHEA:76160"/>
    </physiologicalReaction>
</comment>
<comment type="activity regulation">
    <text evidence="1">Na(+) is not transported, but it plays an essential structural role and its presence is essential for fluoride channel function.</text>
</comment>
<comment type="subcellular location">
    <subcellularLocation>
        <location evidence="1">Cell inner membrane</location>
        <topology evidence="1">Multi-pass membrane protein</topology>
    </subcellularLocation>
</comment>
<comment type="similarity">
    <text evidence="1">Belongs to the fluoride channel Fluc/FEX (TC 1.A.43) family.</text>
</comment>
<feature type="chain" id="PRO_1000026374" description="Fluoride-specific ion channel FluC">
    <location>
        <begin position="1"/>
        <end position="128"/>
    </location>
</feature>
<feature type="transmembrane region" description="Helical" evidence="1">
    <location>
        <begin position="5"/>
        <end position="25"/>
    </location>
</feature>
<feature type="transmembrane region" description="Helical" evidence="1">
    <location>
        <begin position="35"/>
        <end position="55"/>
    </location>
</feature>
<feature type="transmembrane region" description="Helical" evidence="1">
    <location>
        <begin position="67"/>
        <end position="87"/>
    </location>
</feature>
<feature type="transmembrane region" description="Helical" evidence="1">
    <location>
        <begin position="96"/>
        <end position="116"/>
    </location>
</feature>
<feature type="binding site" evidence="1">
    <location>
        <position position="75"/>
    </location>
    <ligand>
        <name>Na(+)</name>
        <dbReference type="ChEBI" id="CHEBI:29101"/>
        <note>structural</note>
    </ligand>
</feature>
<feature type="binding site" evidence="1">
    <location>
        <position position="78"/>
    </location>
    <ligand>
        <name>Na(+)</name>
        <dbReference type="ChEBI" id="CHEBI:29101"/>
        <note>structural</note>
    </ligand>
</feature>
<sequence>MFYSIVAIFVGAGLGALLRWFLSIGLNALLPEVPLGTLASNLIGGYLIGIAVVAFATRAGLPPEWRLFVITGFMGGLTTFSTYSVEVMTHAVQGEFGWALAVAALHLIGSFTLTGLGMWTARAWLAPA</sequence>
<name>FLUC_BURP0</name>
<dbReference type="EMBL" id="CP000572">
    <property type="protein sequence ID" value="ABN90671.1"/>
    <property type="molecule type" value="Genomic_DNA"/>
</dbReference>
<dbReference type="RefSeq" id="WP_004522284.1">
    <property type="nucleotide sequence ID" value="NC_009076.1"/>
</dbReference>
<dbReference type="SMR" id="A3NYA3"/>
<dbReference type="GeneID" id="93061216"/>
<dbReference type="KEGG" id="bpl:BURPS1106A_3085"/>
<dbReference type="HOGENOM" id="CLU_114342_3_3_4"/>
<dbReference type="Proteomes" id="UP000006738">
    <property type="component" value="Chromosome I"/>
</dbReference>
<dbReference type="GO" id="GO:0005886">
    <property type="term" value="C:plasma membrane"/>
    <property type="evidence" value="ECO:0007669"/>
    <property type="project" value="UniProtKB-SubCell"/>
</dbReference>
<dbReference type="GO" id="GO:0062054">
    <property type="term" value="F:fluoride channel activity"/>
    <property type="evidence" value="ECO:0007669"/>
    <property type="project" value="UniProtKB-UniRule"/>
</dbReference>
<dbReference type="GO" id="GO:0046872">
    <property type="term" value="F:metal ion binding"/>
    <property type="evidence" value="ECO:0007669"/>
    <property type="project" value="UniProtKB-KW"/>
</dbReference>
<dbReference type="GO" id="GO:0140114">
    <property type="term" value="P:cellular detoxification of fluoride"/>
    <property type="evidence" value="ECO:0007669"/>
    <property type="project" value="UniProtKB-UniRule"/>
</dbReference>
<dbReference type="HAMAP" id="MF_00454">
    <property type="entry name" value="FluC"/>
    <property type="match status" value="1"/>
</dbReference>
<dbReference type="InterPro" id="IPR003691">
    <property type="entry name" value="FluC"/>
</dbReference>
<dbReference type="NCBIfam" id="TIGR00494">
    <property type="entry name" value="crcB"/>
    <property type="match status" value="1"/>
</dbReference>
<dbReference type="NCBIfam" id="NF010792">
    <property type="entry name" value="PRK14196.1"/>
    <property type="match status" value="1"/>
</dbReference>
<dbReference type="PANTHER" id="PTHR28259">
    <property type="entry name" value="FLUORIDE EXPORT PROTEIN 1-RELATED"/>
    <property type="match status" value="1"/>
</dbReference>
<dbReference type="PANTHER" id="PTHR28259:SF1">
    <property type="entry name" value="FLUORIDE EXPORT PROTEIN 1-RELATED"/>
    <property type="match status" value="1"/>
</dbReference>
<dbReference type="Pfam" id="PF02537">
    <property type="entry name" value="CRCB"/>
    <property type="match status" value="1"/>
</dbReference>
<evidence type="ECO:0000255" key="1">
    <source>
        <dbReference type="HAMAP-Rule" id="MF_00454"/>
    </source>
</evidence>
<organism>
    <name type="scientific">Burkholderia pseudomallei (strain 1106a)</name>
    <dbReference type="NCBI Taxonomy" id="357348"/>
    <lineage>
        <taxon>Bacteria</taxon>
        <taxon>Pseudomonadati</taxon>
        <taxon>Pseudomonadota</taxon>
        <taxon>Betaproteobacteria</taxon>
        <taxon>Burkholderiales</taxon>
        <taxon>Burkholderiaceae</taxon>
        <taxon>Burkholderia</taxon>
        <taxon>pseudomallei group</taxon>
    </lineage>
</organism>
<keyword id="KW-0997">Cell inner membrane</keyword>
<keyword id="KW-1003">Cell membrane</keyword>
<keyword id="KW-0407">Ion channel</keyword>
<keyword id="KW-0406">Ion transport</keyword>
<keyword id="KW-0472">Membrane</keyword>
<keyword id="KW-0479">Metal-binding</keyword>
<keyword id="KW-0915">Sodium</keyword>
<keyword id="KW-0812">Transmembrane</keyword>
<keyword id="KW-1133">Transmembrane helix</keyword>
<keyword id="KW-0813">Transport</keyword>
<proteinExistence type="inferred from homology"/>
<accession>A3NYA3</accession>
<protein>
    <recommendedName>
        <fullName evidence="1">Fluoride-specific ion channel FluC</fullName>
    </recommendedName>
</protein>
<reference key="1">
    <citation type="journal article" date="2010" name="Genome Biol. Evol.">
        <title>Continuing evolution of Burkholderia mallei through genome reduction and large-scale rearrangements.</title>
        <authorList>
            <person name="Losada L."/>
            <person name="Ronning C.M."/>
            <person name="DeShazer D."/>
            <person name="Woods D."/>
            <person name="Fedorova N."/>
            <person name="Kim H.S."/>
            <person name="Shabalina S.A."/>
            <person name="Pearson T.R."/>
            <person name="Brinkac L."/>
            <person name="Tan P."/>
            <person name="Nandi T."/>
            <person name="Crabtree J."/>
            <person name="Badger J."/>
            <person name="Beckstrom-Sternberg S."/>
            <person name="Saqib M."/>
            <person name="Schutzer S.E."/>
            <person name="Keim P."/>
            <person name="Nierman W.C."/>
        </authorList>
    </citation>
    <scope>NUCLEOTIDE SEQUENCE [LARGE SCALE GENOMIC DNA]</scope>
    <source>
        <strain>1106a</strain>
    </source>
</reference>
<gene>
    <name evidence="1" type="primary">fluC</name>
    <name evidence="1" type="synonym">crcB</name>
    <name type="ordered locus">BURPS1106A_3085</name>
</gene>